<sequence>MAAGGAVAAAPECRLLPYALHKWSSFSSTYLPENILVDKPNDQSSRWSSESNYPPQYLILKLERPAIVQNITFGKYEKTHVCNLKKFKVFGGMNEENMTELLSSGLKNDYNKETFTLKHKIDEQMFPCRFIKIVPLLSWGPSFNFSIWYVELSGIDDPDIVQPCLNWYSKYREQEAIRLCLKHFRQHNYTEAFESLQKKTKIALEHPMLTDIHDKLVLKGDFDACEELIEKAVNDGLFNQYISQQEYKPRWSQIIPKSTKGDGEDNRPGMRGGHQMVIDVQTETVYLFGGWDGTQDLADFWAYSVKENQWTCISRDTEKENGPSARSCHKMCIDIQRRQIYTLGRYLDSSVRNSKSLKSDFYRYDIDTNTWMLLSEDTAADGGPKLVFDHQMCMDSEKHMIYTFGGRILTCNGSVDDSRASEPQFSGLFAFNCQCQTWKLLREDSCNAGPEDIQSRIGHCMLFHSKNRCLYVFGGQRSKTYLNDFFSYDVDSDHVDIISDGTKKDSGMVPMTGFTQRATIDPELNEIHVLSGLSKDKEKREENVRNSFWIYDIVRNSWSCVYKNDQAAKDNPTKSLQEEEPCPRFAHQLVYDELHKVHYLFGGNPGKSCSPKMRLDDFWSLKLCRPSKDYLLRHCKYLIRKHRFEEKAQMDPLSALKYLQNDLYITVDHSDPEETKEFQLLASALFKSGSDFTALGFSDVDHTYAQRTQLFDTLVNFFPDSMTPPKGNLVDLITL</sequence>
<evidence type="ECO:0000250" key="1">
    <source>
        <dbReference type="UniProtKB" id="O89050"/>
    </source>
</evidence>
<evidence type="ECO:0000250" key="2">
    <source>
        <dbReference type="UniProtKB" id="Q99PV3"/>
    </source>
</evidence>
<evidence type="ECO:0000250" key="3">
    <source>
        <dbReference type="UniProtKB" id="Q9UL63"/>
    </source>
</evidence>
<evidence type="ECO:0000255" key="4">
    <source>
        <dbReference type="PROSITE-ProRule" id="PRU00058"/>
    </source>
</evidence>
<evidence type="ECO:0000255" key="5">
    <source>
        <dbReference type="PROSITE-ProRule" id="PRU00126"/>
    </source>
</evidence>
<organism>
    <name type="scientific">Pongo abelii</name>
    <name type="common">Sumatran orangutan</name>
    <name type="synonym">Pongo pygmaeus abelii</name>
    <dbReference type="NCBI Taxonomy" id="9601"/>
    <lineage>
        <taxon>Eukaryota</taxon>
        <taxon>Metazoa</taxon>
        <taxon>Chordata</taxon>
        <taxon>Craniata</taxon>
        <taxon>Vertebrata</taxon>
        <taxon>Euteleostomi</taxon>
        <taxon>Mammalia</taxon>
        <taxon>Eutheria</taxon>
        <taxon>Euarchontoglires</taxon>
        <taxon>Primates</taxon>
        <taxon>Haplorrhini</taxon>
        <taxon>Catarrhini</taxon>
        <taxon>Hominidae</taxon>
        <taxon>Pongo</taxon>
    </lineage>
</organism>
<comment type="function">
    <text evidence="1 3">Component of the CTLH E3 ubiquitin-protein ligase complex that selectively accepts ubiquitin from UBE2H and mediates ubiquitination and subsequent proteasomal degradation of the transcription factor HBP1 (By similarity). Required for internalization of the GABA receptor GABRA1 from the cell membrane via endosomes and subsequent GABRA1 degradation. Acts as a mediator of cell spreading and cytoskeletal responses to the extracellular matrix component THBS1 (By similarity).</text>
</comment>
<comment type="subunit">
    <text evidence="1 2 3">Homodimer; may form higher oligomers (By similarity). Identified in the CTLH complex that contains GID4, RANBP9 and/or RANBP10, MKLN1, MAEA, RMND5A (or alternatively its paralog RMND5B), GID8, ARMC8, WDR26 and YPEL5. Within this complex, MAEA, RMND5A (or alternatively its paralog RMND5B), GID8, WDR26, and RANBP9 and/or RANBP10 form the catalytic core, while GID4, MKLN1, ARMC8 and YPEL5 have ancillary roles (By similarity). Interacts with RANBP9 (By similarity). Part of a complex consisting of RANBP9, MKLN1 and GID8 (By similarity). Interacts with GABRA1 (By similarity). Interacts with the C-terminal tail of PTGER3 (By similarity).</text>
</comment>
<comment type="subcellular location">
    <subcellularLocation>
        <location evidence="1">Cytoplasm</location>
    </subcellularLocation>
    <subcellularLocation>
        <location evidence="1">Cytoplasm</location>
        <location evidence="1">Cytosol</location>
    </subcellularLocation>
    <subcellularLocation>
        <location evidence="1">Nucleus</location>
        <location evidence="1">Nucleoplasm</location>
    </subcellularLocation>
    <subcellularLocation>
        <location evidence="1">Cell projection</location>
        <location evidence="1">Ruffle</location>
    </subcellularLocation>
    <subcellularLocation>
        <location evidence="1">Cytoplasm</location>
        <location evidence="1">Cell cortex</location>
    </subcellularLocation>
    <subcellularLocation>
        <location evidence="1">Synapse</location>
    </subcellularLocation>
    <subcellularLocation>
        <location evidence="1">Postsynapse</location>
    </subcellularLocation>
    <text evidence="1">Colocalizes with GABRA1 at synapses and in postsynaptic regions. Colocalizes with actin fibers in the cell cortex.</text>
</comment>
<comment type="domain">
    <text evidence="2">The LisH mediates head to tail dimerization.</text>
</comment>
<keyword id="KW-0007">Acetylation</keyword>
<keyword id="KW-0966">Cell projection</keyword>
<keyword id="KW-0963">Cytoplasm</keyword>
<keyword id="KW-0880">Kelch repeat</keyword>
<keyword id="KW-0539">Nucleus</keyword>
<keyword id="KW-1185">Reference proteome</keyword>
<keyword id="KW-0677">Repeat</keyword>
<keyword id="KW-0770">Synapse</keyword>
<gene>
    <name type="primary">MKLN1</name>
</gene>
<name>MKLN1_PONAB</name>
<accession>Q5RB35</accession>
<proteinExistence type="evidence at transcript level"/>
<protein>
    <recommendedName>
        <fullName>Muskelin</fullName>
    </recommendedName>
</protein>
<dbReference type="EMBL" id="CR858822">
    <property type="protein sequence ID" value="CAH91025.1"/>
    <property type="molecule type" value="mRNA"/>
</dbReference>
<dbReference type="RefSeq" id="NP_001125592.1">
    <property type="nucleotide sequence ID" value="NM_001132120.1"/>
</dbReference>
<dbReference type="SMR" id="Q5RB35"/>
<dbReference type="FunCoup" id="Q5RB35">
    <property type="interactions" value="2372"/>
</dbReference>
<dbReference type="STRING" id="9601.ENSPPYP00000020207"/>
<dbReference type="Ensembl" id="ENSPPYT00000049147.1">
    <property type="protein sequence ID" value="ENSPPYP00000025343.1"/>
    <property type="gene ID" value="ENSPPYG00000018010.3"/>
</dbReference>
<dbReference type="GeneID" id="100172508"/>
<dbReference type="KEGG" id="pon:100172508"/>
<dbReference type="CTD" id="4289"/>
<dbReference type="eggNOG" id="KOG2437">
    <property type="taxonomic scope" value="Eukaryota"/>
</dbReference>
<dbReference type="GeneTree" id="ENSGT00390000001702"/>
<dbReference type="InParanoid" id="Q5RB35"/>
<dbReference type="OMA" id="NKQDYKH"/>
<dbReference type="OrthoDB" id="10052615at2759"/>
<dbReference type="Proteomes" id="UP000001595">
    <property type="component" value="Chromosome 7"/>
</dbReference>
<dbReference type="GO" id="GO:0005938">
    <property type="term" value="C:cell cortex"/>
    <property type="evidence" value="ECO:0000250"/>
    <property type="project" value="UniProtKB"/>
</dbReference>
<dbReference type="GO" id="GO:0005829">
    <property type="term" value="C:cytosol"/>
    <property type="evidence" value="ECO:0000250"/>
    <property type="project" value="UniProtKB"/>
</dbReference>
<dbReference type="GO" id="GO:0098982">
    <property type="term" value="C:GABA-ergic synapse"/>
    <property type="evidence" value="ECO:0007669"/>
    <property type="project" value="Ensembl"/>
</dbReference>
<dbReference type="GO" id="GO:0005654">
    <property type="term" value="C:nucleoplasm"/>
    <property type="evidence" value="ECO:0007669"/>
    <property type="project" value="UniProtKB-SubCell"/>
</dbReference>
<dbReference type="GO" id="GO:0098895">
    <property type="term" value="C:postsynaptic endosome membrane"/>
    <property type="evidence" value="ECO:0007669"/>
    <property type="project" value="Ensembl"/>
</dbReference>
<dbReference type="GO" id="GO:0099164">
    <property type="term" value="C:postsynaptic specialization membrane of symmetric synapse"/>
    <property type="evidence" value="ECO:0007669"/>
    <property type="project" value="Ensembl"/>
</dbReference>
<dbReference type="GO" id="GO:0001726">
    <property type="term" value="C:ruffle"/>
    <property type="evidence" value="ECO:0000250"/>
    <property type="project" value="UniProtKB"/>
</dbReference>
<dbReference type="GO" id="GO:0000151">
    <property type="term" value="C:ubiquitin ligase complex"/>
    <property type="evidence" value="ECO:0007669"/>
    <property type="project" value="Ensembl"/>
</dbReference>
<dbReference type="GO" id="GO:0042803">
    <property type="term" value="F:protein homodimerization activity"/>
    <property type="evidence" value="ECO:0000250"/>
    <property type="project" value="UniProtKB"/>
</dbReference>
<dbReference type="GO" id="GO:0030036">
    <property type="term" value="P:actin cytoskeleton organization"/>
    <property type="evidence" value="ECO:0000250"/>
    <property type="project" value="UniProtKB"/>
</dbReference>
<dbReference type="GO" id="GO:0007160">
    <property type="term" value="P:cell-matrix adhesion"/>
    <property type="evidence" value="ECO:0000250"/>
    <property type="project" value="UniProtKB"/>
</dbReference>
<dbReference type="GO" id="GO:0098968">
    <property type="term" value="P:neurotransmitter receptor transport postsynaptic membrane to endosome"/>
    <property type="evidence" value="ECO:0007669"/>
    <property type="project" value="Ensembl"/>
</dbReference>
<dbReference type="GO" id="GO:0008360">
    <property type="term" value="P:regulation of cell shape"/>
    <property type="evidence" value="ECO:0000250"/>
    <property type="project" value="UniProtKB"/>
</dbReference>
<dbReference type="GO" id="GO:0002090">
    <property type="term" value="P:regulation of receptor internalization"/>
    <property type="evidence" value="ECO:0000250"/>
    <property type="project" value="UniProtKB"/>
</dbReference>
<dbReference type="GO" id="GO:0099003">
    <property type="term" value="P:vesicle-mediated transport in synapse"/>
    <property type="evidence" value="ECO:0007669"/>
    <property type="project" value="Ensembl"/>
</dbReference>
<dbReference type="FunFam" id="2.120.10.80:FF:000018">
    <property type="entry name" value="Muskelin 1"/>
    <property type="match status" value="1"/>
</dbReference>
<dbReference type="FunFam" id="2.120.10.80:FF:000035">
    <property type="entry name" value="Muskelin 1"/>
    <property type="match status" value="1"/>
</dbReference>
<dbReference type="FunFam" id="2.60.120.260:FF:000066">
    <property type="entry name" value="Muskelin 1"/>
    <property type="match status" value="1"/>
</dbReference>
<dbReference type="Gene3D" id="2.60.120.260">
    <property type="entry name" value="Galactose-binding domain-like"/>
    <property type="match status" value="1"/>
</dbReference>
<dbReference type="Gene3D" id="2.120.10.80">
    <property type="entry name" value="Kelch-type beta propeller"/>
    <property type="match status" value="2"/>
</dbReference>
<dbReference type="InterPro" id="IPR056737">
    <property type="entry name" value="Beta-prop_ATRN-MKLN-like"/>
</dbReference>
<dbReference type="InterPro" id="IPR006595">
    <property type="entry name" value="CTLH_C"/>
</dbReference>
<dbReference type="InterPro" id="IPR052456">
    <property type="entry name" value="CTLH_complex_component"/>
</dbReference>
<dbReference type="InterPro" id="IPR011043">
    <property type="entry name" value="Gal_Oxase/kelch_b-propeller"/>
</dbReference>
<dbReference type="InterPro" id="IPR008979">
    <property type="entry name" value="Galactose-bd-like_sf"/>
</dbReference>
<dbReference type="InterPro" id="IPR015915">
    <property type="entry name" value="Kelch-typ_b-propeller"/>
</dbReference>
<dbReference type="InterPro" id="IPR006594">
    <property type="entry name" value="LisH"/>
</dbReference>
<dbReference type="InterPro" id="IPR010565">
    <property type="entry name" value="Muskelin_N"/>
</dbReference>
<dbReference type="PANTHER" id="PTHR15526">
    <property type="entry name" value="MUSKELIN"/>
    <property type="match status" value="1"/>
</dbReference>
<dbReference type="PANTHER" id="PTHR15526:SF5">
    <property type="entry name" value="MUSKELIN"/>
    <property type="match status" value="1"/>
</dbReference>
<dbReference type="Pfam" id="PF24981">
    <property type="entry name" value="Beta-prop_ATRN-LZTR1"/>
    <property type="match status" value="1"/>
</dbReference>
<dbReference type="Pfam" id="PF13415">
    <property type="entry name" value="Kelch_3"/>
    <property type="match status" value="1"/>
</dbReference>
<dbReference type="Pfam" id="PF06588">
    <property type="entry name" value="Muskelin_N"/>
    <property type="match status" value="1"/>
</dbReference>
<dbReference type="SMART" id="SM00667">
    <property type="entry name" value="LisH"/>
    <property type="match status" value="1"/>
</dbReference>
<dbReference type="SUPFAM" id="SSF50965">
    <property type="entry name" value="Galactose oxidase, central domain"/>
    <property type="match status" value="1"/>
</dbReference>
<dbReference type="SUPFAM" id="SSF49785">
    <property type="entry name" value="Galactose-binding domain-like"/>
    <property type="match status" value="1"/>
</dbReference>
<dbReference type="SUPFAM" id="SSF117281">
    <property type="entry name" value="Kelch motif"/>
    <property type="match status" value="1"/>
</dbReference>
<dbReference type="PROSITE" id="PS50897">
    <property type="entry name" value="CTLH"/>
    <property type="match status" value="1"/>
</dbReference>
<dbReference type="PROSITE" id="PS50896">
    <property type="entry name" value="LISH"/>
    <property type="match status" value="1"/>
</dbReference>
<reference key="1">
    <citation type="submission" date="2004-11" db="EMBL/GenBank/DDBJ databases">
        <authorList>
            <consortium name="The German cDNA consortium"/>
        </authorList>
    </citation>
    <scope>NUCLEOTIDE SEQUENCE [LARGE SCALE MRNA]</scope>
    <source>
        <tissue>Heart</tissue>
    </source>
</reference>
<feature type="initiator methionine" description="Removed" evidence="3">
    <location>
        <position position="1"/>
    </location>
</feature>
<feature type="chain" id="PRO_0000286398" description="Muskelin">
    <location>
        <begin position="2"/>
        <end position="735"/>
    </location>
</feature>
<feature type="domain" description="LisH" evidence="5">
    <location>
        <begin position="172"/>
        <end position="204"/>
    </location>
</feature>
<feature type="domain" description="CTLH" evidence="4">
    <location>
        <begin position="206"/>
        <end position="258"/>
    </location>
</feature>
<feature type="repeat" description="Kelch 1">
    <location>
        <begin position="284"/>
        <end position="330"/>
    </location>
</feature>
<feature type="repeat" description="Kelch 2">
    <location>
        <begin position="339"/>
        <end position="391"/>
    </location>
</feature>
<feature type="repeat" description="Kelch 3">
    <location>
        <begin position="408"/>
        <end position="458"/>
    </location>
</feature>
<feature type="repeat" description="Kelch 4">
    <location>
        <begin position="469"/>
        <end position="515"/>
    </location>
</feature>
<feature type="repeat" description="Kelch 5">
    <location>
        <begin position="526"/>
        <end position="578"/>
    </location>
</feature>
<feature type="repeat" description="Kelch 6">
    <location>
        <begin position="597"/>
        <end position="651"/>
    </location>
</feature>
<feature type="modified residue" description="N-acetylalanine" evidence="3">
    <location>
        <position position="2"/>
    </location>
</feature>